<protein>
    <recommendedName>
        <fullName evidence="1">Elongation factor Ts</fullName>
        <shortName evidence="1">EF-Ts</shortName>
    </recommendedName>
</protein>
<reference key="1">
    <citation type="journal article" date="2007" name="PLoS Biol.">
        <title>Evolution of symbiotic bacteria in the distal human intestine.</title>
        <authorList>
            <person name="Xu J."/>
            <person name="Mahowald M.A."/>
            <person name="Ley R.E."/>
            <person name="Lozupone C.A."/>
            <person name="Hamady M."/>
            <person name="Martens E.C."/>
            <person name="Henrissat B."/>
            <person name="Coutinho P.M."/>
            <person name="Minx P."/>
            <person name="Latreille P."/>
            <person name="Cordum H."/>
            <person name="Van Brunt A."/>
            <person name="Kim K."/>
            <person name="Fulton R.S."/>
            <person name="Fulton L.A."/>
            <person name="Clifton S.W."/>
            <person name="Wilson R.K."/>
            <person name="Knight R.D."/>
            <person name="Gordon J.I."/>
        </authorList>
    </citation>
    <scope>NUCLEOTIDE SEQUENCE [LARGE SCALE GENOMIC DNA]</scope>
    <source>
        <strain>ATCC 8503 / DSM 20701 / CIP 104284 / JCM 5825 / NCTC 11152</strain>
    </source>
</reference>
<proteinExistence type="inferred from homology"/>
<gene>
    <name evidence="1" type="primary">tsf</name>
    <name type="ordered locus">BDI_3490</name>
</gene>
<evidence type="ECO:0000255" key="1">
    <source>
        <dbReference type="HAMAP-Rule" id="MF_00050"/>
    </source>
</evidence>
<name>EFTS_PARD8</name>
<comment type="function">
    <text evidence="1">Associates with the EF-Tu.GDP complex and induces the exchange of GDP to GTP. It remains bound to the aminoacyl-tRNA.EF-Tu.GTP complex up to the GTP hydrolysis stage on the ribosome.</text>
</comment>
<comment type="subcellular location">
    <subcellularLocation>
        <location evidence="1">Cytoplasm</location>
    </subcellularLocation>
</comment>
<comment type="similarity">
    <text evidence="1">Belongs to the EF-Ts family.</text>
</comment>
<sequence length="329" mass="35825">MAVTMADITKLRKMSGAGMMDCKKALTESDGDIEKAMEIIRKKGQAIAAKRSDREAAEGCVLAKKDGEFAAIIALKCETDFVAKNEDFVALTQAILDAAVANKCRTLDEVKALPMGKGTIQEAVTDRSGITGEKMELDGYCVVEGAYTTVYNHMGKNQLCTIAAFNKESEEAAHNIVMQIAAMNPIAIDEAGVPESVKEKEIQVAIEKTKAEQVQKAVEAALKKAGINPSHVDSEAHMESNMDKGWITAEDVAKAKEIIATVSAEKAANLPQQMIENIAKGRLGKFLKEVCLLNQEDIMDGKKTVRETMKEIDPELQILAFKRFTLRAE</sequence>
<organism>
    <name type="scientific">Parabacteroides distasonis (strain ATCC 8503 / DSM 20701 / CIP 104284 / JCM 5825 / NCTC 11152)</name>
    <dbReference type="NCBI Taxonomy" id="435591"/>
    <lineage>
        <taxon>Bacteria</taxon>
        <taxon>Pseudomonadati</taxon>
        <taxon>Bacteroidota</taxon>
        <taxon>Bacteroidia</taxon>
        <taxon>Bacteroidales</taxon>
        <taxon>Tannerellaceae</taxon>
        <taxon>Parabacteroides</taxon>
    </lineage>
</organism>
<keyword id="KW-0963">Cytoplasm</keyword>
<keyword id="KW-0251">Elongation factor</keyword>
<keyword id="KW-0648">Protein biosynthesis</keyword>
<keyword id="KW-1185">Reference proteome</keyword>
<dbReference type="EMBL" id="CP000140">
    <property type="protein sequence ID" value="ABR45192.1"/>
    <property type="molecule type" value="Genomic_DNA"/>
</dbReference>
<dbReference type="RefSeq" id="WP_005859480.1">
    <property type="nucleotide sequence ID" value="NC_009615.1"/>
</dbReference>
<dbReference type="SMR" id="A6LHM8"/>
<dbReference type="STRING" id="435591.BDI_3490"/>
<dbReference type="PaxDb" id="435591-BDI_3490"/>
<dbReference type="KEGG" id="pdi:BDI_3490"/>
<dbReference type="eggNOG" id="COG0264">
    <property type="taxonomic scope" value="Bacteria"/>
</dbReference>
<dbReference type="HOGENOM" id="CLU_047155_0_0_10"/>
<dbReference type="BioCyc" id="PDIS435591:G1G5A-3580-MONOMER"/>
<dbReference type="Proteomes" id="UP000000566">
    <property type="component" value="Chromosome"/>
</dbReference>
<dbReference type="GO" id="GO:0005737">
    <property type="term" value="C:cytoplasm"/>
    <property type="evidence" value="ECO:0007669"/>
    <property type="project" value="UniProtKB-SubCell"/>
</dbReference>
<dbReference type="GO" id="GO:0003746">
    <property type="term" value="F:translation elongation factor activity"/>
    <property type="evidence" value="ECO:0007669"/>
    <property type="project" value="UniProtKB-UniRule"/>
</dbReference>
<dbReference type="CDD" id="cd14275">
    <property type="entry name" value="UBA_EF-Ts"/>
    <property type="match status" value="1"/>
</dbReference>
<dbReference type="FunFam" id="1.10.8.10:FF:000001">
    <property type="entry name" value="Elongation factor Ts"/>
    <property type="match status" value="1"/>
</dbReference>
<dbReference type="Gene3D" id="1.10.8.10">
    <property type="entry name" value="DNA helicase RuvA subunit, C-terminal domain"/>
    <property type="match status" value="1"/>
</dbReference>
<dbReference type="Gene3D" id="3.30.479.20">
    <property type="entry name" value="Elongation factor Ts, dimerisation domain"/>
    <property type="match status" value="3"/>
</dbReference>
<dbReference type="HAMAP" id="MF_00050">
    <property type="entry name" value="EF_Ts"/>
    <property type="match status" value="1"/>
</dbReference>
<dbReference type="InterPro" id="IPR036402">
    <property type="entry name" value="EF-Ts_dimer_sf"/>
</dbReference>
<dbReference type="InterPro" id="IPR001816">
    <property type="entry name" value="Transl_elong_EFTs/EF1B"/>
</dbReference>
<dbReference type="InterPro" id="IPR014039">
    <property type="entry name" value="Transl_elong_EFTs/EF1B_dimer"/>
</dbReference>
<dbReference type="InterPro" id="IPR018101">
    <property type="entry name" value="Transl_elong_Ts_CS"/>
</dbReference>
<dbReference type="InterPro" id="IPR009060">
    <property type="entry name" value="UBA-like_sf"/>
</dbReference>
<dbReference type="NCBIfam" id="TIGR00116">
    <property type="entry name" value="tsf"/>
    <property type="match status" value="1"/>
</dbReference>
<dbReference type="PANTHER" id="PTHR11741">
    <property type="entry name" value="ELONGATION FACTOR TS"/>
    <property type="match status" value="1"/>
</dbReference>
<dbReference type="PANTHER" id="PTHR11741:SF0">
    <property type="entry name" value="ELONGATION FACTOR TS, MITOCHONDRIAL"/>
    <property type="match status" value="1"/>
</dbReference>
<dbReference type="Pfam" id="PF00889">
    <property type="entry name" value="EF_TS"/>
    <property type="match status" value="1"/>
</dbReference>
<dbReference type="SUPFAM" id="SSF54713">
    <property type="entry name" value="Elongation factor Ts (EF-Ts), dimerisation domain"/>
    <property type="match status" value="2"/>
</dbReference>
<dbReference type="SUPFAM" id="SSF46934">
    <property type="entry name" value="UBA-like"/>
    <property type="match status" value="1"/>
</dbReference>
<dbReference type="PROSITE" id="PS01126">
    <property type="entry name" value="EF_TS_1"/>
    <property type="match status" value="1"/>
</dbReference>
<dbReference type="PROSITE" id="PS01127">
    <property type="entry name" value="EF_TS_2"/>
    <property type="match status" value="1"/>
</dbReference>
<feature type="chain" id="PRO_1000006141" description="Elongation factor Ts">
    <location>
        <begin position="1"/>
        <end position="329"/>
    </location>
</feature>
<feature type="region of interest" description="Involved in Mg(2+) ion dislocation from EF-Tu" evidence="1">
    <location>
        <begin position="79"/>
        <end position="82"/>
    </location>
</feature>
<accession>A6LHM8</accession>